<organism>
    <name type="scientific">Equine herpesvirus 1 (strain V592)</name>
    <name type="common">EHV-1</name>
    <name type="synonym">Equine abortion virus</name>
    <dbReference type="NCBI Taxonomy" id="310273"/>
    <lineage>
        <taxon>Viruses</taxon>
        <taxon>Duplodnaviria</taxon>
        <taxon>Heunggongvirae</taxon>
        <taxon>Peploviricota</taxon>
        <taxon>Herviviricetes</taxon>
        <taxon>Herpesvirales</taxon>
        <taxon>Orthoherpesviridae</taxon>
        <taxon>Alphaherpesvirinae</taxon>
        <taxon>Varicellovirus</taxon>
        <taxon>Varicellovirus equidalpha1</taxon>
        <taxon>Equid alphaherpesvirus 1</taxon>
    </lineage>
</organism>
<keyword id="KW-1015">Disulfide bond</keyword>
<keyword id="KW-1048">Host nucleus</keyword>
<keyword id="KW-0231">Viral genome packaging</keyword>
<keyword id="KW-1188">Viral release from host cell</keyword>
<keyword id="KW-0946">Virion</keyword>
<accession>P84458</accession>
<accession>Q6S6U8</accession>
<dbReference type="EMBL" id="AY464052">
    <property type="protein sequence ID" value="AAS45940.1"/>
    <property type="molecule type" value="Genomic_DNA"/>
</dbReference>
<dbReference type="SMR" id="P84458"/>
<dbReference type="KEGG" id="vg:2948564"/>
<dbReference type="Proteomes" id="UP000008296">
    <property type="component" value="Segment"/>
</dbReference>
<dbReference type="GO" id="GO:0042025">
    <property type="term" value="C:host cell nucleus"/>
    <property type="evidence" value="ECO:0007669"/>
    <property type="project" value="UniProtKB-SubCell"/>
</dbReference>
<dbReference type="GO" id="GO:0044423">
    <property type="term" value="C:virion component"/>
    <property type="evidence" value="ECO:0007669"/>
    <property type="project" value="UniProtKB-KW"/>
</dbReference>
<dbReference type="GO" id="GO:0051276">
    <property type="term" value="P:chromosome organization"/>
    <property type="evidence" value="ECO:0007669"/>
    <property type="project" value="InterPro"/>
</dbReference>
<dbReference type="HAMAP" id="MF_04012">
    <property type="entry name" value="HSV_PORTL"/>
    <property type="match status" value="1"/>
</dbReference>
<dbReference type="InterPro" id="IPR002660">
    <property type="entry name" value="Herpes_Portal"/>
</dbReference>
<dbReference type="Pfam" id="PF01763">
    <property type="entry name" value="Herpes_UL6"/>
    <property type="match status" value="1"/>
</dbReference>
<reference evidence="3 4" key="1">
    <citation type="submission" date="2003-11" db="EMBL/GenBank/DDBJ databases">
        <authorList>
            <person name="Davis-Poynter N."/>
            <person name="Nugent J."/>
            <person name="Birch-Machin I."/>
            <person name="Allen G.P."/>
        </authorList>
    </citation>
    <scope>NUCLEOTIDE SEQUENCE [LARGE SCALE GENOMIC DNA]</scope>
</reference>
<feature type="chain" id="PRO_0000115906" description="Portal protein">
    <location>
        <begin position="1"/>
        <end position="753"/>
    </location>
</feature>
<feature type="region of interest" description="Disordered" evidence="2">
    <location>
        <begin position="1"/>
        <end position="44"/>
    </location>
</feature>
<feature type="region of interest" description="Putative leucine zipper motif" evidence="1">
    <location>
        <begin position="454"/>
        <end position="475"/>
    </location>
</feature>
<feature type="region of interest" description="Disordered" evidence="2">
    <location>
        <begin position="498"/>
        <end position="523"/>
    </location>
</feature>
<feature type="region of interest" description="Disordered" evidence="2">
    <location>
        <begin position="668"/>
        <end position="753"/>
    </location>
</feature>
<feature type="compositionally biased region" description="Basic and acidic residues" evidence="2">
    <location>
        <begin position="1"/>
        <end position="30"/>
    </location>
</feature>
<feature type="compositionally biased region" description="Low complexity" evidence="2">
    <location>
        <begin position="507"/>
        <end position="518"/>
    </location>
</feature>
<feature type="compositionally biased region" description="Basic and acidic residues" evidence="2">
    <location>
        <begin position="681"/>
        <end position="706"/>
    </location>
</feature>
<feature type="compositionally biased region" description="Basic residues" evidence="2">
    <location>
        <begin position="707"/>
        <end position="726"/>
    </location>
</feature>
<feature type="disulfide bond" description="Interchain" evidence="1">
    <location>
        <position position="192"/>
    </location>
</feature>
<feature type="disulfide bond" description="Interchain" evidence="1">
    <location>
        <position position="293"/>
    </location>
</feature>
<comment type="function">
    <text evidence="1">Forms a portal in the viral capsid through which viral DNA is translocated during DNA packaging. Assembles as a dodecamer at a single fivefold axe of the T=16 icosahedric capsid. Binds to the molecular motor that translocates the viral DNA, termed terminase.</text>
</comment>
<comment type="subunit">
    <text evidence="1">Homododecamerizes. Interacts with terminase subunits TRM1 and TRM3.</text>
</comment>
<comment type="subcellular location">
    <subcellularLocation>
        <location evidence="1">Virion</location>
    </subcellularLocation>
    <subcellularLocation>
        <location evidence="1">Host nucleus</location>
    </subcellularLocation>
</comment>
<comment type="similarity">
    <text evidence="1">Belongs to the herpesviridae portal protein family.</text>
</comment>
<protein>
    <recommendedName>
        <fullName evidence="1">Portal protein</fullName>
    </recommendedName>
</protein>
<sequence>MSADSIEPKQKRLRYADANKGRKVERKNTPRFEATTGLQSPGEEEQISADGGWVLIHPTPKTMLFKEILMGELGYTEGQGVYNAIRSTEAAIRQIQTTILTNTLNATRYEDLAKDWQTHLDSRGVSAEEIAATYGMYSEGEAVRVAEQIFATWHRTLQMSLLDFVRSITACFSASEPDGTASFAKYIDWIACLGLIPLQRLKRAPGATVHPKLWRKLPTDVPSLESCVDERDLAGKLYVANSLLREGLEAVVELARCTASVAIMDYDRVNIFYHYTRREVVAIDSTTGKRGECLVLWQPIWKDGSVLFDSPLQRICGEVCNCHALREHAKLCQLLNTVPVKILVGRKKDEAQGPGWASKAVDKLMGEGEELHSSSAASRLVKLIVNMKSMRHIGDITETVRSYLNETSTNLLSGAQVDTSLPGFGQSGKTKQGGNMPVQEAFRTSVINGINGMLEGYVNNLFKTIEDLRTGNSGLLDQLRDRESEITHLREQLLRVSQAAADGSTQPGASSAALPGSGAKSGAGGLGHEVIDIRNLMGDDGYVANSFQSRYIPAYTADMERLSRLWDQELLRCFKMNRITNNQGQEMSVSYSNSSISLLLAPYFFSILRARHLGFLITHQEAYRSEEELCVAVFKKTRLEAYLTELSTLFVARVRNSIAALNSTKRDLPVNDNEAQSDEEQLGKPSDERYYEGRDRSASPQRDRGRNGRGYHKRRRFSNNYRRRSGLARDSSIRDRSQRGSRPTPLLHDHVGH</sequence>
<evidence type="ECO:0000255" key="1">
    <source>
        <dbReference type="HAMAP-Rule" id="MF_04012"/>
    </source>
</evidence>
<evidence type="ECO:0000256" key="2">
    <source>
        <dbReference type="SAM" id="MobiDB-lite"/>
    </source>
</evidence>
<evidence type="ECO:0000305" key="3"/>
<evidence type="ECO:0000312" key="4">
    <source>
        <dbReference type="EMBL" id="AAS45940.1"/>
    </source>
</evidence>
<proteinExistence type="inferred from homology"/>
<name>PORTL_EHV1V</name>
<organismHost>
    <name type="scientific">Equus caballus</name>
    <name type="common">Horse</name>
    <dbReference type="NCBI Taxonomy" id="9796"/>
</organismHost>
<gene>
    <name type="ordered locus">56</name>
</gene>